<keyword id="KW-1003">Cell membrane</keyword>
<keyword id="KW-0472">Membrane</keyword>
<keyword id="KW-0560">Oxidoreductase</keyword>
<keyword id="KW-1185">Reference proteome</keyword>
<comment type="function">
    <text evidence="1">Involved in a F420-dependent anti-oxidant mechanism that protects M.bovis against oxidative stress and bactericidal agents. Catalyzes the F420H(2)-dependent two-electron reduction of quinones to dihydroquinones, thereby preventing the formation of cytotoxic semiquinones obtained by the one-electron reduction pathway.</text>
</comment>
<comment type="catalytic activity">
    <reaction evidence="1">
        <text>oxidized coenzyme F420-(gamma-L-Glu)(n) + a quinol + H(+) = reduced coenzyme F420-(gamma-L-Glu)(n) + a quinone</text>
        <dbReference type="Rhea" id="RHEA:39663"/>
        <dbReference type="Rhea" id="RHEA-COMP:12939"/>
        <dbReference type="Rhea" id="RHEA-COMP:14378"/>
        <dbReference type="ChEBI" id="CHEBI:15378"/>
        <dbReference type="ChEBI" id="CHEBI:24646"/>
        <dbReference type="ChEBI" id="CHEBI:132124"/>
        <dbReference type="ChEBI" id="CHEBI:133980"/>
        <dbReference type="ChEBI" id="CHEBI:139511"/>
    </reaction>
</comment>
<comment type="subcellular location">
    <subcellularLocation>
        <location evidence="1">Cell membrane</location>
        <topology evidence="1">Peripheral membrane protein</topology>
    </subcellularLocation>
</comment>
<comment type="similarity">
    <text evidence="2">Belongs to the F420H(2)-dependent quinone reductase family.</text>
</comment>
<gene>
    <name type="ordered locus">BQ2027_MB1292C</name>
</gene>
<evidence type="ECO:0000250" key="1">
    <source>
        <dbReference type="UniProtKB" id="P9WP15"/>
    </source>
</evidence>
<evidence type="ECO:0000305" key="2"/>
<sequence>MDISRWLERHVGVQLLRLHDAIYRGTNGRIGHRIPGAPPSLLLHTTGAKTSQPRTTSLTYARDGDAYLIVASKGGDPRSPGWYHNLKANPDVEINVGPKRFGVTAKPVQPHDPDYARLWQIVNENNANRYTNYQSRTSRPIPVVVLTRR</sequence>
<dbReference type="EC" id="1.1.98.-"/>
<dbReference type="EMBL" id="LT708304">
    <property type="protein sequence ID" value="SIT99893.1"/>
    <property type="molecule type" value="Genomic_DNA"/>
</dbReference>
<dbReference type="RefSeq" id="NP_854946.1">
    <property type="nucleotide sequence ID" value="NC_002945.3"/>
</dbReference>
<dbReference type="RefSeq" id="WP_003406364.1">
    <property type="nucleotide sequence ID" value="NC_002945.4"/>
</dbReference>
<dbReference type="SMR" id="P64788"/>
<dbReference type="KEGG" id="mbo:BQ2027_MB1292C"/>
<dbReference type="PATRIC" id="fig|233413.5.peg.1417"/>
<dbReference type="Proteomes" id="UP000001419">
    <property type="component" value="Chromosome"/>
</dbReference>
<dbReference type="GO" id="GO:0005886">
    <property type="term" value="C:plasma membrane"/>
    <property type="evidence" value="ECO:0007669"/>
    <property type="project" value="UniProtKB-SubCell"/>
</dbReference>
<dbReference type="GO" id="GO:0070967">
    <property type="term" value="F:coenzyme F420 binding"/>
    <property type="evidence" value="ECO:0007669"/>
    <property type="project" value="TreeGrafter"/>
</dbReference>
<dbReference type="GO" id="GO:0016491">
    <property type="term" value="F:oxidoreductase activity"/>
    <property type="evidence" value="ECO:0007669"/>
    <property type="project" value="UniProtKB-KW"/>
</dbReference>
<dbReference type="Gene3D" id="2.30.110.10">
    <property type="entry name" value="Electron Transport, Fmn-binding Protein, Chain A"/>
    <property type="match status" value="1"/>
</dbReference>
<dbReference type="InterPro" id="IPR004378">
    <property type="entry name" value="F420H2_quin_Rdtase"/>
</dbReference>
<dbReference type="InterPro" id="IPR012349">
    <property type="entry name" value="Split_barrel_FMN-bd"/>
</dbReference>
<dbReference type="NCBIfam" id="TIGR00026">
    <property type="entry name" value="hi_GC_TIGR00026"/>
    <property type="match status" value="1"/>
</dbReference>
<dbReference type="PANTHER" id="PTHR39428">
    <property type="entry name" value="F420H(2)-DEPENDENT QUINONE REDUCTASE RV1261C"/>
    <property type="match status" value="1"/>
</dbReference>
<dbReference type="PANTHER" id="PTHR39428:SF1">
    <property type="entry name" value="F420H(2)-DEPENDENT QUINONE REDUCTASE RV1261C"/>
    <property type="match status" value="1"/>
</dbReference>
<dbReference type="Pfam" id="PF04075">
    <property type="entry name" value="F420H2_quin_red"/>
    <property type="match status" value="1"/>
</dbReference>
<organism>
    <name type="scientific">Mycobacterium bovis (strain ATCC BAA-935 / AF2122/97)</name>
    <dbReference type="NCBI Taxonomy" id="233413"/>
    <lineage>
        <taxon>Bacteria</taxon>
        <taxon>Bacillati</taxon>
        <taxon>Actinomycetota</taxon>
        <taxon>Actinomycetes</taxon>
        <taxon>Mycobacteriales</taxon>
        <taxon>Mycobacteriaceae</taxon>
        <taxon>Mycobacterium</taxon>
        <taxon>Mycobacterium tuberculosis complex</taxon>
    </lineage>
</organism>
<proteinExistence type="inferred from homology"/>
<accession>P64788</accession>
<accession>A0A1R3XYS7</accession>
<accession>Q11057</accession>
<accession>X2BH95</accession>
<name>FQR92_MYCBO</name>
<protein>
    <recommendedName>
        <fullName evidence="2">Putative F420H(2)-dependent quinone reductase Mb1292c</fullName>
        <shortName>Fqr</shortName>
        <ecNumber>1.1.98.-</ecNumber>
    </recommendedName>
</protein>
<feature type="chain" id="PRO_0000103779" description="Putative F420H(2)-dependent quinone reductase Mb1292c">
    <location>
        <begin position="1"/>
        <end position="149"/>
    </location>
</feature>
<feature type="binding site" evidence="1">
    <location>
        <begin position="48"/>
        <end position="50"/>
    </location>
    <ligand>
        <name>coenzyme F420-(gamma-Glu)n</name>
        <dbReference type="ChEBI" id="CHEBI:133980"/>
    </ligand>
</feature>
<feature type="binding site" evidence="1">
    <location>
        <begin position="54"/>
        <end position="59"/>
    </location>
    <ligand>
        <name>coenzyme F420-(gamma-Glu)n</name>
        <dbReference type="ChEBI" id="CHEBI:133980"/>
    </ligand>
</feature>
<feature type="binding site" evidence="1">
    <location>
        <begin position="70"/>
        <end position="73"/>
    </location>
    <ligand>
        <name>coenzyme F420-(gamma-Glu)n</name>
        <dbReference type="ChEBI" id="CHEBI:133980"/>
    </ligand>
</feature>
<feature type="binding site" evidence="1">
    <location>
        <begin position="81"/>
        <end position="85"/>
    </location>
    <ligand>
        <name>coenzyme F420-(gamma-Glu)n</name>
        <dbReference type="ChEBI" id="CHEBI:133980"/>
    </ligand>
</feature>
<feature type="binding site" evidence="1">
    <location>
        <position position="130"/>
    </location>
    <ligand>
        <name>coenzyme F420-(gamma-Glu)n</name>
        <dbReference type="ChEBI" id="CHEBI:133980"/>
    </ligand>
</feature>
<reference key="1">
    <citation type="journal article" date="2003" name="Proc. Natl. Acad. Sci. U.S.A.">
        <title>The complete genome sequence of Mycobacterium bovis.</title>
        <authorList>
            <person name="Garnier T."/>
            <person name="Eiglmeier K."/>
            <person name="Camus J.-C."/>
            <person name="Medina N."/>
            <person name="Mansoor H."/>
            <person name="Pryor M."/>
            <person name="Duthoy S."/>
            <person name="Grondin S."/>
            <person name="Lacroix C."/>
            <person name="Monsempe C."/>
            <person name="Simon S."/>
            <person name="Harris B."/>
            <person name="Atkin R."/>
            <person name="Doggett J."/>
            <person name="Mayes R."/>
            <person name="Keating L."/>
            <person name="Wheeler P.R."/>
            <person name="Parkhill J."/>
            <person name="Barrell B.G."/>
            <person name="Cole S.T."/>
            <person name="Gordon S.V."/>
            <person name="Hewinson R.G."/>
        </authorList>
    </citation>
    <scope>NUCLEOTIDE SEQUENCE [LARGE SCALE GENOMIC DNA]</scope>
    <source>
        <strain>ATCC BAA-935 / AF2122/97</strain>
    </source>
</reference>
<reference key="2">
    <citation type="journal article" date="2017" name="Genome Announc.">
        <title>Updated reference genome sequence and annotation of Mycobacterium bovis AF2122/97.</title>
        <authorList>
            <person name="Malone K.M."/>
            <person name="Farrell D."/>
            <person name="Stuber T.P."/>
            <person name="Schubert O.T."/>
            <person name="Aebersold R."/>
            <person name="Robbe-Austerman S."/>
            <person name="Gordon S.V."/>
        </authorList>
    </citation>
    <scope>NUCLEOTIDE SEQUENCE [LARGE SCALE GENOMIC DNA]</scope>
    <scope>GENOME REANNOTATION</scope>
    <source>
        <strain>ATCC BAA-935 / AF2122/97</strain>
    </source>
</reference>